<keyword id="KW-0238">DNA-binding</keyword>
<keyword id="KW-1185">Reference proteome</keyword>
<keyword id="KW-0678">Repressor</keyword>
<keyword id="KW-0804">Transcription</keyword>
<keyword id="KW-0805">Transcription regulation</keyword>
<comment type="function">
    <text evidence="1">Repressor involved in the biosynthesis of the osmoprotectant glycine betaine. It represses transcription of the choline transporter BetT and the genes of BetAB involved in the synthesis of glycine betaine (By similarity).</text>
</comment>
<comment type="pathway">
    <text>Amine and polyamine biosynthesis; betaine biosynthesis via choline pathway [regulation].</text>
</comment>
<evidence type="ECO:0000250" key="1"/>
<evidence type="ECO:0000255" key="2">
    <source>
        <dbReference type="HAMAP-Rule" id="MF_00768"/>
    </source>
</evidence>
<proteinExistence type="inferred from homology"/>
<sequence>MPKLGMREIRRAQLIDATLRSIDEAGLPGTTLASVAQRANISTGIVSHYFGDKDGLLEATMRHVLRDLWAATTRRRAAASDAPRARLRAVVAANFDDTQISAPVMKTWLAFWSQSMHEPTLRRLQRVNTRRLHSNLCAEFAKTLPRARAREAASGLAALIDGLWLRGALAGEPLDTKAALKLANDYIDQLLAPRV</sequence>
<dbReference type="EMBL" id="BX571966">
    <property type="protein sequence ID" value="CAH38824.1"/>
    <property type="molecule type" value="Genomic_DNA"/>
</dbReference>
<dbReference type="RefSeq" id="WP_004202513.1">
    <property type="nucleotide sequence ID" value="NZ_CP009537.1"/>
</dbReference>
<dbReference type="RefSeq" id="YP_111363.1">
    <property type="nucleotide sequence ID" value="NC_006351.1"/>
</dbReference>
<dbReference type="SMR" id="Q63KK9"/>
<dbReference type="STRING" id="272560.BPSS1353"/>
<dbReference type="GeneID" id="93063521"/>
<dbReference type="KEGG" id="bps:BPSS1353"/>
<dbReference type="PATRIC" id="fig|272560.51.peg.4657"/>
<dbReference type="eggNOG" id="COG1309">
    <property type="taxonomic scope" value="Bacteria"/>
</dbReference>
<dbReference type="UniPathway" id="UPA00529"/>
<dbReference type="Proteomes" id="UP000000605">
    <property type="component" value="Chromosome 2"/>
</dbReference>
<dbReference type="GO" id="GO:0003700">
    <property type="term" value="F:DNA-binding transcription factor activity"/>
    <property type="evidence" value="ECO:0007669"/>
    <property type="project" value="UniProtKB-UniRule"/>
</dbReference>
<dbReference type="GO" id="GO:0000976">
    <property type="term" value="F:transcription cis-regulatory region binding"/>
    <property type="evidence" value="ECO:0007669"/>
    <property type="project" value="TreeGrafter"/>
</dbReference>
<dbReference type="GO" id="GO:0019285">
    <property type="term" value="P:glycine betaine biosynthetic process from choline"/>
    <property type="evidence" value="ECO:0007669"/>
    <property type="project" value="UniProtKB-UniRule"/>
</dbReference>
<dbReference type="GO" id="GO:0045892">
    <property type="term" value="P:negative regulation of DNA-templated transcription"/>
    <property type="evidence" value="ECO:0007669"/>
    <property type="project" value="UniProtKB-UniRule"/>
</dbReference>
<dbReference type="Gene3D" id="1.10.357.10">
    <property type="entry name" value="Tetracycline Repressor, domain 2"/>
    <property type="match status" value="1"/>
</dbReference>
<dbReference type="HAMAP" id="MF_00768">
    <property type="entry name" value="HTH_type_BetI"/>
    <property type="match status" value="1"/>
</dbReference>
<dbReference type="InterPro" id="IPR039538">
    <property type="entry name" value="BetI_C"/>
</dbReference>
<dbReference type="InterPro" id="IPR023772">
    <property type="entry name" value="DNA-bd_HTH_TetR-type_CS"/>
</dbReference>
<dbReference type="InterPro" id="IPR009057">
    <property type="entry name" value="Homeodomain-like_sf"/>
</dbReference>
<dbReference type="InterPro" id="IPR050109">
    <property type="entry name" value="HTH-type_TetR-like_transc_reg"/>
</dbReference>
<dbReference type="InterPro" id="IPR001647">
    <property type="entry name" value="HTH_TetR"/>
</dbReference>
<dbReference type="InterPro" id="IPR036271">
    <property type="entry name" value="Tet_transcr_reg_TetR-rel_C_sf"/>
</dbReference>
<dbReference type="InterPro" id="IPR017757">
    <property type="entry name" value="Tscrpt_rep_BetI"/>
</dbReference>
<dbReference type="NCBIfam" id="TIGR03384">
    <property type="entry name" value="betaine_BetI"/>
    <property type="match status" value="1"/>
</dbReference>
<dbReference type="NCBIfam" id="NF001978">
    <property type="entry name" value="PRK00767.1"/>
    <property type="match status" value="1"/>
</dbReference>
<dbReference type="PANTHER" id="PTHR30055:SF234">
    <property type="entry name" value="HTH-TYPE TRANSCRIPTIONAL REGULATOR BETI"/>
    <property type="match status" value="1"/>
</dbReference>
<dbReference type="PANTHER" id="PTHR30055">
    <property type="entry name" value="HTH-TYPE TRANSCRIPTIONAL REGULATOR RUTR"/>
    <property type="match status" value="1"/>
</dbReference>
<dbReference type="Pfam" id="PF13977">
    <property type="entry name" value="TetR_C_6"/>
    <property type="match status" value="1"/>
</dbReference>
<dbReference type="Pfam" id="PF00440">
    <property type="entry name" value="TetR_N"/>
    <property type="match status" value="1"/>
</dbReference>
<dbReference type="SUPFAM" id="SSF46689">
    <property type="entry name" value="Homeodomain-like"/>
    <property type="match status" value="1"/>
</dbReference>
<dbReference type="SUPFAM" id="SSF48498">
    <property type="entry name" value="Tetracyclin repressor-like, C-terminal domain"/>
    <property type="match status" value="1"/>
</dbReference>
<dbReference type="PROSITE" id="PS01081">
    <property type="entry name" value="HTH_TETR_1"/>
    <property type="match status" value="1"/>
</dbReference>
<dbReference type="PROSITE" id="PS50977">
    <property type="entry name" value="HTH_TETR_2"/>
    <property type="match status" value="1"/>
</dbReference>
<reference key="1">
    <citation type="journal article" date="2004" name="Proc. Natl. Acad. Sci. U.S.A.">
        <title>Genomic plasticity of the causative agent of melioidosis, Burkholderia pseudomallei.</title>
        <authorList>
            <person name="Holden M.T.G."/>
            <person name="Titball R.W."/>
            <person name="Peacock S.J."/>
            <person name="Cerdeno-Tarraga A.-M."/>
            <person name="Atkins T."/>
            <person name="Crossman L.C."/>
            <person name="Pitt T."/>
            <person name="Churcher C."/>
            <person name="Mungall K.L."/>
            <person name="Bentley S.D."/>
            <person name="Sebaihia M."/>
            <person name="Thomson N.R."/>
            <person name="Bason N."/>
            <person name="Beacham I.R."/>
            <person name="Brooks K."/>
            <person name="Brown K.A."/>
            <person name="Brown N.F."/>
            <person name="Challis G.L."/>
            <person name="Cherevach I."/>
            <person name="Chillingworth T."/>
            <person name="Cronin A."/>
            <person name="Crossett B."/>
            <person name="Davis P."/>
            <person name="DeShazer D."/>
            <person name="Feltwell T."/>
            <person name="Fraser A."/>
            <person name="Hance Z."/>
            <person name="Hauser H."/>
            <person name="Holroyd S."/>
            <person name="Jagels K."/>
            <person name="Keith K.E."/>
            <person name="Maddison M."/>
            <person name="Moule S."/>
            <person name="Price C."/>
            <person name="Quail M.A."/>
            <person name="Rabbinowitsch E."/>
            <person name="Rutherford K."/>
            <person name="Sanders M."/>
            <person name="Simmonds M."/>
            <person name="Songsivilai S."/>
            <person name="Stevens K."/>
            <person name="Tumapa S."/>
            <person name="Vesaratchavest M."/>
            <person name="Whitehead S."/>
            <person name="Yeats C."/>
            <person name="Barrell B.G."/>
            <person name="Oyston P.C.F."/>
            <person name="Parkhill J."/>
        </authorList>
    </citation>
    <scope>NUCLEOTIDE SEQUENCE [LARGE SCALE GENOMIC DNA]</scope>
    <source>
        <strain>K96243</strain>
    </source>
</reference>
<feature type="chain" id="PRO_0000257730" description="HTH-type transcriptional regulator BetI">
    <location>
        <begin position="1"/>
        <end position="195"/>
    </location>
</feature>
<feature type="domain" description="HTH tetR-type" evidence="2">
    <location>
        <begin position="8"/>
        <end position="68"/>
    </location>
</feature>
<feature type="DNA-binding region" description="H-T-H motif" evidence="2">
    <location>
        <begin position="31"/>
        <end position="50"/>
    </location>
</feature>
<organism>
    <name type="scientific">Burkholderia pseudomallei (strain K96243)</name>
    <dbReference type="NCBI Taxonomy" id="272560"/>
    <lineage>
        <taxon>Bacteria</taxon>
        <taxon>Pseudomonadati</taxon>
        <taxon>Pseudomonadota</taxon>
        <taxon>Betaproteobacteria</taxon>
        <taxon>Burkholderiales</taxon>
        <taxon>Burkholderiaceae</taxon>
        <taxon>Burkholderia</taxon>
        <taxon>pseudomallei group</taxon>
    </lineage>
</organism>
<gene>
    <name evidence="2" type="primary">betI</name>
    <name type="ordered locus">BPSS1353</name>
</gene>
<accession>Q63KK9</accession>
<protein>
    <recommendedName>
        <fullName evidence="2">HTH-type transcriptional regulator BetI</fullName>
    </recommendedName>
</protein>
<name>BETI_BURPS</name>